<proteinExistence type="evidence at transcript level"/>
<gene>
    <name evidence="6" type="ORF">GRMZM2G433025</name>
</gene>
<feature type="transit peptide" description="Chloroplast" evidence="2">
    <location>
        <begin position="1"/>
        <end position="42"/>
    </location>
</feature>
<feature type="chain" id="PRO_0000439067" description="Large ribosomal RNA subunit accumulation protein YCED homolog 1, chloroplastic">
    <location>
        <begin position="43"/>
        <end position="293"/>
    </location>
</feature>
<evidence type="ECO:0000250" key="1">
    <source>
        <dbReference type="UniProtKB" id="P0AB28"/>
    </source>
</evidence>
<evidence type="ECO:0000255" key="2"/>
<evidence type="ECO:0000269" key="3">
    <source>
    </source>
</evidence>
<evidence type="ECO:0000303" key="4">
    <source>
    </source>
</evidence>
<evidence type="ECO:0000305" key="5"/>
<evidence type="ECO:0000305" key="6">
    <source>
    </source>
</evidence>
<name>YCED1_MAIZE</name>
<accession>A0A1D6HQ92</accession>
<comment type="function">
    <text evidence="3">Plays a role in synthesis, processing and/or stability of 23S rRNA. Required for embryogenesis. May be involved in RPL23 transcript levels regulation in non-photosynthetic plastids.</text>
</comment>
<comment type="subcellular location">
    <subcellularLocation>
        <location evidence="2">Plastid</location>
        <location evidence="2">Chloroplast</location>
    </subcellularLocation>
</comment>
<comment type="tissue specificity">
    <text evidence="3">Highly expressed in shoots and leaves. Detected in roots, embryos and endosperm.</text>
</comment>
<comment type="disruption phenotype">
    <text evidence="3">Embryonic lethality when homozygous in non-permissive genetic background (cv. Wisconsin 22) or albino seedlings in permissive background (cv. B73).</text>
</comment>
<comment type="similarity">
    <text evidence="5">Belongs to the DUF177 domain family.</text>
</comment>
<keyword id="KW-0150">Chloroplast</keyword>
<keyword id="KW-0934">Plastid</keyword>
<keyword id="KW-1185">Reference proteome</keyword>
<keyword id="KW-0690">Ribosome biogenesis</keyword>
<keyword id="KW-0809">Transit peptide</keyword>
<sequence length="293" mass="31743">MYYPQPTVSLAAAVALLRPSLRRHSQRASSLLRSSTPPPWVSARRRTAVSDDFFTVELDATGVEPEPDSIDDGLPSPWEGAVVYRRDAAVQHLEYASTLERLGLGDLSSPDSRARAADLGLAGGTLDSTGAQPRTPVLVSVDVTRRRGRLRLDGIVRTVITLGCFRCAEPAPQGIFANFSLLLTEDPVEEEPDLGTIFQEDDDKGGASLACAMDGDQDIDWDDRLHFPAADKEIDISKHIRDMIHLEITLDAVCNPNCKGLCLTCGANLNTTSSCTCKPRNVQGLSPLKGVFK</sequence>
<protein>
    <recommendedName>
        <fullName evidence="5">Large ribosomal RNA subunit accumulation protein YCED homolog 1, chloroplastic</fullName>
    </recommendedName>
    <alternativeName>
        <fullName evidence="1">23S rRNA accumulation protein YCED</fullName>
    </alternativeName>
    <alternativeName>
        <fullName evidence="1">Large ribosomal RNA subunit accumulation protein YCED</fullName>
    </alternativeName>
    <alternativeName>
        <fullName evidence="4">Protein DUF177A</fullName>
    </alternativeName>
</protein>
<organism>
    <name type="scientific">Zea mays</name>
    <name type="common">Maize</name>
    <dbReference type="NCBI Taxonomy" id="4577"/>
    <lineage>
        <taxon>Eukaryota</taxon>
        <taxon>Viridiplantae</taxon>
        <taxon>Streptophyta</taxon>
        <taxon>Embryophyta</taxon>
        <taxon>Tracheophyta</taxon>
        <taxon>Spermatophyta</taxon>
        <taxon>Magnoliopsida</taxon>
        <taxon>Liliopsida</taxon>
        <taxon>Poales</taxon>
        <taxon>Poaceae</taxon>
        <taxon>PACMAD clade</taxon>
        <taxon>Panicoideae</taxon>
        <taxon>Andropogonodae</taxon>
        <taxon>Andropogoneae</taxon>
        <taxon>Tripsacinae</taxon>
        <taxon>Zea</taxon>
    </lineage>
</organism>
<reference key="1">
    <citation type="journal article" date="2009" name="Science">
        <title>The B73 maize genome: complexity, diversity, and dynamics.</title>
        <authorList>
            <person name="Schnable P.S."/>
            <person name="Ware D."/>
            <person name="Fulton R.S."/>
            <person name="Stein J.C."/>
            <person name="Wei F."/>
            <person name="Pasternak S."/>
            <person name="Liang C."/>
            <person name="Zhang J."/>
            <person name="Fulton L."/>
            <person name="Graves T.A."/>
            <person name="Minx P."/>
            <person name="Reily A.D."/>
            <person name="Courtney L."/>
            <person name="Kruchowski S.S."/>
            <person name="Tomlinson C."/>
            <person name="Strong C."/>
            <person name="Delehaunty K."/>
            <person name="Fronick C."/>
            <person name="Courtney B."/>
            <person name="Rock S.M."/>
            <person name="Belter E."/>
            <person name="Du F."/>
            <person name="Kim K."/>
            <person name="Abbott R.M."/>
            <person name="Cotton M."/>
            <person name="Levy A."/>
            <person name="Marchetto P."/>
            <person name="Ochoa K."/>
            <person name="Jackson S.M."/>
            <person name="Gillam B."/>
            <person name="Chen W."/>
            <person name="Yan L."/>
            <person name="Higginbotham J."/>
            <person name="Cardenas M."/>
            <person name="Waligorski J."/>
            <person name="Applebaum E."/>
            <person name="Phelps L."/>
            <person name="Falcone J."/>
            <person name="Kanchi K."/>
            <person name="Thane T."/>
            <person name="Scimone A."/>
            <person name="Thane N."/>
            <person name="Henke J."/>
            <person name="Wang T."/>
            <person name="Ruppert J."/>
            <person name="Shah N."/>
            <person name="Rotter K."/>
            <person name="Hodges J."/>
            <person name="Ingenthron E."/>
            <person name="Cordes M."/>
            <person name="Kohlberg S."/>
            <person name="Sgro J."/>
            <person name="Delgado B."/>
            <person name="Mead K."/>
            <person name="Chinwalla A."/>
            <person name="Leonard S."/>
            <person name="Crouse K."/>
            <person name="Collura K."/>
            <person name="Kudrna D."/>
            <person name="Currie J."/>
            <person name="He R."/>
            <person name="Angelova A."/>
            <person name="Rajasekar S."/>
            <person name="Mueller T."/>
            <person name="Lomeli R."/>
            <person name="Scara G."/>
            <person name="Ko A."/>
            <person name="Delaney K."/>
            <person name="Wissotski M."/>
            <person name="Lopez G."/>
            <person name="Campos D."/>
            <person name="Braidotti M."/>
            <person name="Ashley E."/>
            <person name="Golser W."/>
            <person name="Kim H."/>
            <person name="Lee S."/>
            <person name="Lin J."/>
            <person name="Dujmic Z."/>
            <person name="Kim W."/>
            <person name="Talag J."/>
            <person name="Zuccolo A."/>
            <person name="Fan C."/>
            <person name="Sebastian A."/>
            <person name="Kramer M."/>
            <person name="Spiegel L."/>
            <person name="Nascimento L."/>
            <person name="Zutavern T."/>
            <person name="Miller B."/>
            <person name="Ambroise C."/>
            <person name="Muller S."/>
            <person name="Spooner W."/>
            <person name="Narechania A."/>
            <person name="Ren L."/>
            <person name="Wei S."/>
            <person name="Kumari S."/>
            <person name="Faga B."/>
            <person name="Levy M.J."/>
            <person name="McMahan L."/>
            <person name="Van Buren P."/>
            <person name="Vaughn M.W."/>
            <person name="Ying K."/>
            <person name="Yeh C.-T."/>
            <person name="Emrich S.J."/>
            <person name="Jia Y."/>
            <person name="Kalyanaraman A."/>
            <person name="Hsia A.-P."/>
            <person name="Barbazuk W.B."/>
            <person name="Baucom R.S."/>
            <person name="Brutnell T.P."/>
            <person name="Carpita N.C."/>
            <person name="Chaparro C."/>
            <person name="Chia J.-M."/>
            <person name="Deragon J.-M."/>
            <person name="Estill J.C."/>
            <person name="Fu Y."/>
            <person name="Jeddeloh J.A."/>
            <person name="Han Y."/>
            <person name="Lee H."/>
            <person name="Li P."/>
            <person name="Lisch D.R."/>
            <person name="Liu S."/>
            <person name="Liu Z."/>
            <person name="Nagel D.H."/>
            <person name="McCann M.C."/>
            <person name="SanMiguel P."/>
            <person name="Myers A.M."/>
            <person name="Nettleton D."/>
            <person name="Nguyen J."/>
            <person name="Penning B.W."/>
            <person name="Ponnala L."/>
            <person name="Schneider K.L."/>
            <person name="Schwartz D.C."/>
            <person name="Sharma A."/>
            <person name="Soderlund C."/>
            <person name="Springer N.M."/>
            <person name="Sun Q."/>
            <person name="Wang H."/>
            <person name="Waterman M."/>
            <person name="Westerman R."/>
            <person name="Wolfgruber T.K."/>
            <person name="Yang L."/>
            <person name="Yu Y."/>
            <person name="Zhang L."/>
            <person name="Zhou S."/>
            <person name="Zhu Q."/>
            <person name="Bennetzen J.L."/>
            <person name="Dawe R.K."/>
            <person name="Jiang J."/>
            <person name="Jiang N."/>
            <person name="Presting G.G."/>
            <person name="Wessler S.R."/>
            <person name="Aluru S."/>
            <person name="Martienssen R.A."/>
            <person name="Clifton S.W."/>
            <person name="McCombie W.R."/>
            <person name="Wing R.A."/>
            <person name="Wilson R.K."/>
        </authorList>
    </citation>
    <scope>NUCLEOTIDE SEQUENCE [LARGE SCALE GENOMIC DNA]</scope>
    <source>
        <strain>cv. B73</strain>
    </source>
</reference>
<reference key="2">
    <citation type="journal article" date="2016" name="J. Exp. Bot.">
        <title>Essential role of conserved DUF177A protein in plastid 23S rRNA accumulation and plant embryogenesis.</title>
        <authorList>
            <person name="Yang J."/>
            <person name="Suzuki M."/>
            <person name="McCarty D.R."/>
        </authorList>
    </citation>
    <scope>FUNCTION</scope>
    <scope>DISRUPTION PHENOTYPE</scope>
    <scope>TISSUE SPECIFICITY</scope>
    <source>
        <strain>cv. B73</strain>
        <strain>cv. Wisconsin 22</strain>
    </source>
</reference>
<dbReference type="RefSeq" id="XP_008646451.1">
    <property type="nucleotide sequence ID" value="XM_008648229.1"/>
</dbReference>
<dbReference type="FunCoup" id="A0A1D6HQ92">
    <property type="interactions" value="1337"/>
</dbReference>
<dbReference type="STRING" id="4577.A0A1D6HQ92"/>
<dbReference type="PaxDb" id="4577-GRMZM2G433025_P01"/>
<dbReference type="EnsemblPlants" id="Zm00001eb259480_T001">
    <property type="protein sequence ID" value="Zm00001eb259480_P001"/>
    <property type="gene ID" value="Zm00001eb259480"/>
</dbReference>
<dbReference type="EnsemblPlants" id="Zm00001eb259480_T002">
    <property type="protein sequence ID" value="Zm00001eb259480_P002"/>
    <property type="gene ID" value="Zm00001eb259480"/>
</dbReference>
<dbReference type="Gramene" id="Zm00001eb259480_T001">
    <property type="protein sequence ID" value="Zm00001eb259480_P001"/>
    <property type="gene ID" value="Zm00001eb259480"/>
</dbReference>
<dbReference type="Gramene" id="Zm00001eb259480_T002">
    <property type="protein sequence ID" value="Zm00001eb259480_P002"/>
    <property type="gene ID" value="Zm00001eb259480"/>
</dbReference>
<dbReference type="MaizeGDB" id="9035558"/>
<dbReference type="eggNOG" id="ENOG502QUUH">
    <property type="taxonomic scope" value="Eukaryota"/>
</dbReference>
<dbReference type="InParanoid" id="A0A1D6HQ92"/>
<dbReference type="OMA" id="QIFRNNM"/>
<dbReference type="Proteomes" id="UP000007305">
    <property type="component" value="Chromosome 5"/>
</dbReference>
<dbReference type="ExpressionAtlas" id="A0A1D6HQ92">
    <property type="expression patterns" value="baseline and differential"/>
</dbReference>
<dbReference type="GO" id="GO:0009507">
    <property type="term" value="C:chloroplast"/>
    <property type="evidence" value="ECO:0007669"/>
    <property type="project" value="UniProtKB-SubCell"/>
</dbReference>
<dbReference type="GO" id="GO:0042254">
    <property type="term" value="P:ribosome biogenesis"/>
    <property type="evidence" value="ECO:0007669"/>
    <property type="project" value="UniProtKB-KW"/>
</dbReference>
<dbReference type="InterPro" id="IPR003772">
    <property type="entry name" value="YceD"/>
</dbReference>
<dbReference type="PANTHER" id="PTHR34374">
    <property type="entry name" value="LARGE RIBOSOMAL RNA SUBUNIT ACCUMULATION PROTEIN YCED HOMOLOG 1, CHLOROPLASTIC"/>
    <property type="match status" value="1"/>
</dbReference>
<dbReference type="PANTHER" id="PTHR34374:SF1">
    <property type="entry name" value="LARGE RIBOSOMAL RNA SUBUNIT ACCUMULATION PROTEIN YCED HOMOLOG 1, CHLOROPLASTIC"/>
    <property type="match status" value="1"/>
</dbReference>
<dbReference type="Pfam" id="PF02620">
    <property type="entry name" value="YceD"/>
    <property type="match status" value="1"/>
</dbReference>